<organism>
    <name type="scientific">Ancylometes sp.</name>
    <name type="common">South American fishing spider</name>
    <dbReference type="NCBI Taxonomy" id="280265"/>
    <lineage>
        <taxon>Eukaryota</taxon>
        <taxon>Metazoa</taxon>
        <taxon>Ecdysozoa</taxon>
        <taxon>Arthropoda</taxon>
        <taxon>Chelicerata</taxon>
        <taxon>Arachnida</taxon>
        <taxon>Araneae</taxon>
        <taxon>Araneomorphae</taxon>
        <taxon>Entelegynae</taxon>
        <taxon>Lycosoidea</taxon>
        <taxon>Ctenidae</taxon>
        <taxon>Ancylometes</taxon>
    </lineage>
</organism>
<evidence type="ECO:0000269" key="1">
    <source ref="1"/>
</evidence>
<evidence type="ECO:0000303" key="2">
    <source ref="1"/>
</evidence>
<evidence type="ECO:0000305" key="3"/>
<accession>P84001</accession>
<reference evidence="3" key="1">
    <citation type="submission" date="2004-06" db="UniProtKB">
        <title>Protein ANC29C0 from venom of South American fishing spider (Ancylometes spp.) has sequence similarities to neurotoxic peptide Caeron precursor from Bark spider (Caerostris extrusa).</title>
        <authorList>
            <person name="Richardson M."/>
            <person name="Pimenta A.M.C."/>
            <person name="Bemquerer M.P."/>
            <person name="Santoro M.M."/>
            <person name="Figueiredo S.G."/>
            <person name="Cordeiro M.N."/>
        </authorList>
    </citation>
    <scope>PROTEIN SEQUENCE</scope>
    <scope>SUBCELLULAR LOCATION</scope>
    <scope>TISSUE SPECIFICITY</scope>
    <scope>MASS SPECTROMETRY</scope>
    <source>
        <tissue>Venom</tissue>
    </source>
</reference>
<name>29C0_ANCSP</name>
<protein>
    <recommendedName>
        <fullName>U3-ctenitoxin-Asp1a</fullName>
        <shortName>U3-CNTX-Asp1a</shortName>
    </recommendedName>
    <alternativeName>
        <fullName>Venom protein ANC29C0</fullName>
    </alternativeName>
</protein>
<dbReference type="SMR" id="P84001"/>
<dbReference type="ArachnoServer" id="AS000014">
    <property type="toxin name" value="U3-ctenitoxin-Asp1a"/>
</dbReference>
<dbReference type="GO" id="GO:0005576">
    <property type="term" value="C:extracellular region"/>
    <property type="evidence" value="ECO:0007669"/>
    <property type="project" value="UniProtKB-SubCell"/>
</dbReference>
<dbReference type="GO" id="GO:0090729">
    <property type="term" value="F:toxin activity"/>
    <property type="evidence" value="ECO:0007669"/>
    <property type="project" value="UniProtKB-KW"/>
</dbReference>
<dbReference type="Gene3D" id="2.10.80.10">
    <property type="entry name" value="Lipase, subunit A"/>
    <property type="match status" value="1"/>
</dbReference>
<comment type="function">
    <text evidence="2">Possible neurotoxin.</text>
</comment>
<comment type="subcellular location">
    <subcellularLocation>
        <location evidence="1">Secreted</location>
    </subcellularLocation>
</comment>
<comment type="tissue specificity">
    <text evidence="1">Expressed by the venom gland.</text>
</comment>
<comment type="mass spectrometry" mass="9571.0" method="Electrospray" evidence="1"/>
<comment type="similarity">
    <text>Belongs to the neurotoxin 20 family.</text>
</comment>
<feature type="chain" id="PRO_0000087682" description="U3-ctenitoxin-Asp1a">
    <location>
        <begin position="1"/>
        <end position="50" status="greater than"/>
    </location>
</feature>
<feature type="non-terminal residue" evidence="2">
    <location>
        <position position="50"/>
    </location>
</feature>
<sequence length="50" mass="5679">ANACTKQADCAEDECCLDNLFFKRPYCEMRYGAGKRCAAASVYKEDKDLY</sequence>
<proteinExistence type="evidence at protein level"/>
<keyword id="KW-0903">Direct protein sequencing</keyword>
<keyword id="KW-0528">Neurotoxin</keyword>
<keyword id="KW-0964">Secreted</keyword>
<keyword id="KW-0800">Toxin</keyword>